<protein>
    <recommendedName>
        <fullName evidence="1">UPF0736 protein BCE_1296</fullName>
    </recommendedName>
</protein>
<organism>
    <name type="scientific">Bacillus cereus (strain ATCC 10987 / NRS 248)</name>
    <dbReference type="NCBI Taxonomy" id="222523"/>
    <lineage>
        <taxon>Bacteria</taxon>
        <taxon>Bacillati</taxon>
        <taxon>Bacillota</taxon>
        <taxon>Bacilli</taxon>
        <taxon>Bacillales</taxon>
        <taxon>Bacillaceae</taxon>
        <taxon>Bacillus</taxon>
        <taxon>Bacillus cereus group</taxon>
    </lineage>
</organism>
<sequence length="248" mass="30064">MLYLHDVWVNWFEGEENGYNVCHFYEWRKDDTIELLDQVPLLKVDATLYHYIENELLELPQKMLEDVHHKAYIRKNHERLQQEYCFVVTDGKGIIAIDTIGYNVPIRKSRLIPRQEQMVYEMVENVQAEKYEFQVEEIEKEHHILSPSPFIMNGLTRKERQLKQLLFMALDQLHTTKNTAEIRYWFTEWDPSAYGMVQHMEFEDIWAKLYEEAKTGWSEKHEQLCERLVKGQPFFEKLWEMENEQKVN</sequence>
<proteinExistence type="inferred from homology"/>
<name>Y1296_BACC1</name>
<reference key="1">
    <citation type="journal article" date="2004" name="Nucleic Acids Res.">
        <title>The genome sequence of Bacillus cereus ATCC 10987 reveals metabolic adaptations and a large plasmid related to Bacillus anthracis pXO1.</title>
        <authorList>
            <person name="Rasko D.A."/>
            <person name="Ravel J."/>
            <person name="Oekstad O.A."/>
            <person name="Helgason E."/>
            <person name="Cer R.Z."/>
            <person name="Jiang L."/>
            <person name="Shores K.A."/>
            <person name="Fouts D.E."/>
            <person name="Tourasse N.J."/>
            <person name="Angiuoli S.V."/>
            <person name="Kolonay J.F."/>
            <person name="Nelson W.C."/>
            <person name="Kolstoe A.-B."/>
            <person name="Fraser C.M."/>
            <person name="Read T.D."/>
        </authorList>
    </citation>
    <scope>NUCLEOTIDE SEQUENCE [LARGE SCALE GENOMIC DNA]</scope>
    <source>
        <strain>ATCC 10987 / NRS 248</strain>
    </source>
</reference>
<accession>Q73BX2</accession>
<feature type="chain" id="PRO_0000369138" description="UPF0736 protein BCE_1296">
    <location>
        <begin position="1"/>
        <end position="248"/>
    </location>
</feature>
<evidence type="ECO:0000255" key="1">
    <source>
        <dbReference type="HAMAP-Rule" id="MF_01860"/>
    </source>
</evidence>
<gene>
    <name type="ordered locus">BCE_1296</name>
</gene>
<dbReference type="EMBL" id="AE017194">
    <property type="protein sequence ID" value="AAS40225.1"/>
    <property type="molecule type" value="Genomic_DNA"/>
</dbReference>
<dbReference type="SMR" id="Q73BX2"/>
<dbReference type="KEGG" id="bca:BCE_1296"/>
<dbReference type="HOGENOM" id="CLU_1101152_0_0_9"/>
<dbReference type="Proteomes" id="UP000002527">
    <property type="component" value="Chromosome"/>
</dbReference>
<dbReference type="HAMAP" id="MF_01860">
    <property type="entry name" value="UPF0736"/>
    <property type="match status" value="1"/>
</dbReference>
<dbReference type="InterPro" id="IPR020909">
    <property type="entry name" value="UPF0736"/>
</dbReference>
<dbReference type="Pfam" id="PF12227">
    <property type="entry name" value="DUF3603"/>
    <property type="match status" value="1"/>
</dbReference>
<comment type="similarity">
    <text evidence="1">Belongs to the UPF0736 family.</text>
</comment>